<name>ZNUC_VIBVY</name>
<feature type="chain" id="PRO_0000281564" description="Zinc import ATP-binding protein ZnuC">
    <location>
        <begin position="1"/>
        <end position="261"/>
    </location>
</feature>
<feature type="domain" description="ABC transporter" evidence="1">
    <location>
        <begin position="5"/>
        <end position="220"/>
    </location>
</feature>
<feature type="region of interest" description="Disordered" evidence="2">
    <location>
        <begin position="236"/>
        <end position="261"/>
    </location>
</feature>
<feature type="compositionally biased region" description="Basic residues" evidence="2">
    <location>
        <begin position="252"/>
        <end position="261"/>
    </location>
</feature>
<feature type="binding site" evidence="1">
    <location>
        <begin position="37"/>
        <end position="44"/>
    </location>
    <ligand>
        <name>ATP</name>
        <dbReference type="ChEBI" id="CHEBI:30616"/>
    </ligand>
</feature>
<keyword id="KW-0067">ATP-binding</keyword>
<keyword id="KW-0997">Cell inner membrane</keyword>
<keyword id="KW-1003">Cell membrane</keyword>
<keyword id="KW-0406">Ion transport</keyword>
<keyword id="KW-0472">Membrane</keyword>
<keyword id="KW-0547">Nucleotide-binding</keyword>
<keyword id="KW-1278">Translocase</keyword>
<keyword id="KW-0813">Transport</keyword>
<keyword id="KW-0862">Zinc</keyword>
<keyword id="KW-0864">Zinc transport</keyword>
<accession>Q7MMN0</accession>
<protein>
    <recommendedName>
        <fullName evidence="1">Zinc import ATP-binding protein ZnuC</fullName>
        <ecNumber evidence="1">7.2.2.20</ecNumber>
    </recommendedName>
</protein>
<organism>
    <name type="scientific">Vibrio vulnificus (strain YJ016)</name>
    <dbReference type="NCBI Taxonomy" id="196600"/>
    <lineage>
        <taxon>Bacteria</taxon>
        <taxon>Pseudomonadati</taxon>
        <taxon>Pseudomonadota</taxon>
        <taxon>Gammaproteobacteria</taxon>
        <taxon>Vibrionales</taxon>
        <taxon>Vibrionaceae</taxon>
        <taxon>Vibrio</taxon>
    </lineage>
</organism>
<comment type="function">
    <text evidence="1">Part of the ABC transporter complex ZnuABC involved in zinc import. Responsible for energy coupling to the transport system.</text>
</comment>
<comment type="catalytic activity">
    <reaction evidence="1">
        <text>Zn(2+)(out) + ATP(in) + H2O(in) = Zn(2+)(in) + ADP(in) + phosphate(in) + H(+)(in)</text>
        <dbReference type="Rhea" id="RHEA:29795"/>
        <dbReference type="ChEBI" id="CHEBI:15377"/>
        <dbReference type="ChEBI" id="CHEBI:15378"/>
        <dbReference type="ChEBI" id="CHEBI:29105"/>
        <dbReference type="ChEBI" id="CHEBI:30616"/>
        <dbReference type="ChEBI" id="CHEBI:43474"/>
        <dbReference type="ChEBI" id="CHEBI:456216"/>
        <dbReference type="EC" id="7.2.2.20"/>
    </reaction>
</comment>
<comment type="subunit">
    <text evidence="1">The complex is composed of two ATP-binding proteins (ZnuC), two transmembrane proteins (ZnuB) and a solute-binding protein (ZnuA).</text>
</comment>
<comment type="subcellular location">
    <subcellularLocation>
        <location evidence="1">Cell inner membrane</location>
        <topology evidence="1">Peripheral membrane protein</topology>
    </subcellularLocation>
</comment>
<comment type="similarity">
    <text evidence="1">Belongs to the ABC transporter superfamily. Zinc importer (TC 3.A.1.15.5) family.</text>
</comment>
<dbReference type="EC" id="7.2.2.20" evidence="1"/>
<dbReference type="EMBL" id="BA000037">
    <property type="protein sequence ID" value="BAC93801.1"/>
    <property type="molecule type" value="Genomic_DNA"/>
</dbReference>
<dbReference type="RefSeq" id="WP_011078269.1">
    <property type="nucleotide sequence ID" value="NC_005139.1"/>
</dbReference>
<dbReference type="SMR" id="Q7MMN0"/>
<dbReference type="STRING" id="672.VV93_v1c09600"/>
<dbReference type="KEGG" id="vvy:VV1037"/>
<dbReference type="PATRIC" id="fig|196600.6.peg.1034"/>
<dbReference type="eggNOG" id="COG1121">
    <property type="taxonomic scope" value="Bacteria"/>
</dbReference>
<dbReference type="HOGENOM" id="CLU_000604_1_11_6"/>
<dbReference type="Proteomes" id="UP000002675">
    <property type="component" value="Chromosome I"/>
</dbReference>
<dbReference type="GO" id="GO:0005886">
    <property type="term" value="C:plasma membrane"/>
    <property type="evidence" value="ECO:0007669"/>
    <property type="project" value="UniProtKB-SubCell"/>
</dbReference>
<dbReference type="GO" id="GO:0015633">
    <property type="term" value="F:ABC-type zinc transporter activity"/>
    <property type="evidence" value="ECO:0007669"/>
    <property type="project" value="UniProtKB-EC"/>
</dbReference>
<dbReference type="GO" id="GO:0005524">
    <property type="term" value="F:ATP binding"/>
    <property type="evidence" value="ECO:0007669"/>
    <property type="project" value="UniProtKB-KW"/>
</dbReference>
<dbReference type="GO" id="GO:0016887">
    <property type="term" value="F:ATP hydrolysis activity"/>
    <property type="evidence" value="ECO:0007669"/>
    <property type="project" value="InterPro"/>
</dbReference>
<dbReference type="GO" id="GO:0010043">
    <property type="term" value="P:response to zinc ion"/>
    <property type="evidence" value="ECO:0007669"/>
    <property type="project" value="TreeGrafter"/>
</dbReference>
<dbReference type="FunFam" id="3.40.50.300:FF:000392">
    <property type="entry name" value="Zinc import ATP-binding protein ZnuC"/>
    <property type="match status" value="1"/>
</dbReference>
<dbReference type="Gene3D" id="3.40.50.300">
    <property type="entry name" value="P-loop containing nucleotide triphosphate hydrolases"/>
    <property type="match status" value="1"/>
</dbReference>
<dbReference type="InterPro" id="IPR003593">
    <property type="entry name" value="AAA+_ATPase"/>
</dbReference>
<dbReference type="InterPro" id="IPR003439">
    <property type="entry name" value="ABC_transporter-like_ATP-bd"/>
</dbReference>
<dbReference type="InterPro" id="IPR050153">
    <property type="entry name" value="Metal_Ion_Import_ABC"/>
</dbReference>
<dbReference type="InterPro" id="IPR027417">
    <property type="entry name" value="P-loop_NTPase"/>
</dbReference>
<dbReference type="NCBIfam" id="NF007090">
    <property type="entry name" value="PRK09544.1"/>
    <property type="match status" value="1"/>
</dbReference>
<dbReference type="PANTHER" id="PTHR42734">
    <property type="entry name" value="METAL TRANSPORT SYSTEM ATP-BINDING PROTEIN TM_0124-RELATED"/>
    <property type="match status" value="1"/>
</dbReference>
<dbReference type="PANTHER" id="PTHR42734:SF9">
    <property type="entry name" value="ZINC IMPORT ATP-BINDING PROTEIN ZNUC"/>
    <property type="match status" value="1"/>
</dbReference>
<dbReference type="Pfam" id="PF00005">
    <property type="entry name" value="ABC_tran"/>
    <property type="match status" value="1"/>
</dbReference>
<dbReference type="SMART" id="SM00382">
    <property type="entry name" value="AAA"/>
    <property type="match status" value="1"/>
</dbReference>
<dbReference type="SUPFAM" id="SSF52540">
    <property type="entry name" value="P-loop containing nucleoside triphosphate hydrolases"/>
    <property type="match status" value="1"/>
</dbReference>
<dbReference type="PROSITE" id="PS50893">
    <property type="entry name" value="ABC_TRANSPORTER_2"/>
    <property type="match status" value="1"/>
</dbReference>
<dbReference type="PROSITE" id="PS51298">
    <property type="entry name" value="ZNUC"/>
    <property type="match status" value="1"/>
</dbReference>
<evidence type="ECO:0000255" key="1">
    <source>
        <dbReference type="HAMAP-Rule" id="MF_01725"/>
    </source>
</evidence>
<evidence type="ECO:0000256" key="2">
    <source>
        <dbReference type="SAM" id="MobiDB-lite"/>
    </source>
</evidence>
<reference key="1">
    <citation type="journal article" date="2003" name="Genome Res.">
        <title>Comparative genome analysis of Vibrio vulnificus, a marine pathogen.</title>
        <authorList>
            <person name="Chen C.-Y."/>
            <person name="Wu K.-M."/>
            <person name="Chang Y.-C."/>
            <person name="Chang C.-H."/>
            <person name="Tsai H.-C."/>
            <person name="Liao T.-L."/>
            <person name="Liu Y.-M."/>
            <person name="Chen H.-J."/>
            <person name="Shen A.B.-T."/>
            <person name="Li J.-C."/>
            <person name="Su T.-L."/>
            <person name="Shao C.-P."/>
            <person name="Lee C.-T."/>
            <person name="Hor L.-I."/>
            <person name="Tsai S.-F."/>
        </authorList>
    </citation>
    <scope>NUCLEOTIDE SEQUENCE [LARGE SCALE GENOMIC DNA]</scope>
    <source>
        <strain>YJ016</strain>
    </source>
</reference>
<gene>
    <name evidence="1" type="primary">znuC</name>
    <name type="ordered locus">VV1037</name>
</gene>
<proteinExistence type="inferred from homology"/>
<sequence>MSALISLKALSVTFDDKKVLDSISLDLHKGKITTLIGPNGAGKSTLVKIIIGLLKPTSGQVQRQAKLTIGYVPQKLKLNDTLPLNVIRFLNLSGKYSQQETMEALRLVGAEHLYKSNMHKLSGGETQRVLLARALLQRPDLLVLDEPAQGVDIQGQIDLYDLIESIRHRFDCAVFMVSHDLHLVMAKTDEVICLQHHVCCSGAPEDITQHPSYIALFGSAARDSLAIYHHQHDHHHHDLAGQPVSGDATQCNHHHHGHHHD</sequence>